<protein>
    <recommendedName>
        <fullName>Histone chaperone asf-1</fullName>
    </recommendedName>
    <alternativeName>
        <fullName>Anti-silencing function protein 1</fullName>
    </alternativeName>
</protein>
<keyword id="KW-0143">Chaperone</keyword>
<keyword id="KW-0156">Chromatin regulator</keyword>
<keyword id="KW-0539">Nucleus</keyword>
<keyword id="KW-1185">Reference proteome</keyword>
<keyword id="KW-0804">Transcription</keyword>
<keyword id="KW-0805">Transcription regulation</keyword>
<dbReference type="EMBL" id="CM002242">
    <property type="protein sequence ID" value="EAA29352.1"/>
    <property type="molecule type" value="Genomic_DNA"/>
</dbReference>
<dbReference type="RefSeq" id="XP_958588.1">
    <property type="nucleotide sequence ID" value="XM_953495.2"/>
</dbReference>
<dbReference type="SMR" id="Q7S1X9"/>
<dbReference type="FunCoup" id="Q7S1X9">
    <property type="interactions" value="773"/>
</dbReference>
<dbReference type="STRING" id="367110.Q7S1X9"/>
<dbReference type="PaxDb" id="5141-EFNCRP00000009211"/>
<dbReference type="EnsemblFungi" id="EAA29352">
    <property type="protein sequence ID" value="EAA29352"/>
    <property type="gene ID" value="NCU09436"/>
</dbReference>
<dbReference type="GeneID" id="3874735"/>
<dbReference type="KEGG" id="ncr:NCU09436"/>
<dbReference type="VEuPathDB" id="FungiDB:NCU09436"/>
<dbReference type="HOGENOM" id="CLU_060354_0_2_1"/>
<dbReference type="InParanoid" id="Q7S1X9"/>
<dbReference type="OMA" id="CSYDERE"/>
<dbReference type="OrthoDB" id="29755at2759"/>
<dbReference type="Proteomes" id="UP000001805">
    <property type="component" value="Chromosome 7, Linkage Group VII"/>
</dbReference>
<dbReference type="GO" id="GO:0000785">
    <property type="term" value="C:chromatin"/>
    <property type="evidence" value="ECO:0000318"/>
    <property type="project" value="GO_Central"/>
</dbReference>
<dbReference type="GO" id="GO:0000781">
    <property type="term" value="C:chromosome, telomeric region"/>
    <property type="evidence" value="ECO:0007669"/>
    <property type="project" value="GOC"/>
</dbReference>
<dbReference type="GO" id="GO:0005829">
    <property type="term" value="C:cytosol"/>
    <property type="evidence" value="ECO:0007669"/>
    <property type="project" value="EnsemblFungi"/>
</dbReference>
<dbReference type="GO" id="GO:0070775">
    <property type="term" value="C:H3 histone acetyltransferase complex"/>
    <property type="evidence" value="ECO:0007669"/>
    <property type="project" value="EnsemblFungi"/>
</dbReference>
<dbReference type="GO" id="GO:0005634">
    <property type="term" value="C:nucleus"/>
    <property type="evidence" value="ECO:0000318"/>
    <property type="project" value="GO_Central"/>
</dbReference>
<dbReference type="GO" id="GO:0010698">
    <property type="term" value="F:acetyltransferase activator activity"/>
    <property type="evidence" value="ECO:0007669"/>
    <property type="project" value="EnsemblFungi"/>
</dbReference>
<dbReference type="GO" id="GO:0042393">
    <property type="term" value="F:histone binding"/>
    <property type="evidence" value="ECO:0000318"/>
    <property type="project" value="GO_Central"/>
</dbReference>
<dbReference type="GO" id="GO:0033554">
    <property type="term" value="P:cellular response to stress"/>
    <property type="evidence" value="ECO:0007669"/>
    <property type="project" value="EnsemblFungi"/>
</dbReference>
<dbReference type="GO" id="GO:0006335">
    <property type="term" value="P:DNA replication-dependent chromatin assembly"/>
    <property type="evidence" value="ECO:0000318"/>
    <property type="project" value="GO_Central"/>
</dbReference>
<dbReference type="GO" id="GO:0006334">
    <property type="term" value="P:nucleosome assembly"/>
    <property type="evidence" value="ECO:0007669"/>
    <property type="project" value="InterPro"/>
</dbReference>
<dbReference type="GO" id="GO:0006337">
    <property type="term" value="P:nucleosome disassembly"/>
    <property type="evidence" value="ECO:0007669"/>
    <property type="project" value="EnsemblFungi"/>
</dbReference>
<dbReference type="GO" id="GO:0032968">
    <property type="term" value="P:positive regulation of transcription elongation by RNA polymerase II"/>
    <property type="evidence" value="ECO:0007669"/>
    <property type="project" value="EnsemblFungi"/>
</dbReference>
<dbReference type="GO" id="GO:0036211">
    <property type="term" value="P:protein modification process"/>
    <property type="evidence" value="ECO:0007669"/>
    <property type="project" value="EnsemblFungi"/>
</dbReference>
<dbReference type="GO" id="GO:0030466">
    <property type="term" value="P:silent mating-type cassette heterochromatin formation"/>
    <property type="evidence" value="ECO:0007669"/>
    <property type="project" value="EnsemblFungi"/>
</dbReference>
<dbReference type="GO" id="GO:0031509">
    <property type="term" value="P:subtelomeric heterochromatin formation"/>
    <property type="evidence" value="ECO:0007669"/>
    <property type="project" value="EnsemblFungi"/>
</dbReference>
<dbReference type="FunFam" id="2.60.40.1490:FF:000001">
    <property type="entry name" value="Histone chaperone ASF1"/>
    <property type="match status" value="1"/>
</dbReference>
<dbReference type="Gene3D" id="2.60.40.1490">
    <property type="entry name" value="Histone chaperone ASF1-like"/>
    <property type="match status" value="1"/>
</dbReference>
<dbReference type="InterPro" id="IPR006818">
    <property type="entry name" value="ASF1-like"/>
</dbReference>
<dbReference type="InterPro" id="IPR036747">
    <property type="entry name" value="ASF1-like_sf"/>
</dbReference>
<dbReference type="InterPro" id="IPR017282">
    <property type="entry name" value="Hist_deposition_Asf1"/>
</dbReference>
<dbReference type="PANTHER" id="PTHR12040">
    <property type="entry name" value="ANTI-SILENCING PROTEIN 1"/>
    <property type="match status" value="1"/>
</dbReference>
<dbReference type="PANTHER" id="PTHR12040:SF0">
    <property type="entry name" value="HISTONE CHAPERONE ASF1"/>
    <property type="match status" value="1"/>
</dbReference>
<dbReference type="Pfam" id="PF04729">
    <property type="entry name" value="ASF1_hist_chap"/>
    <property type="match status" value="1"/>
</dbReference>
<dbReference type="PIRSF" id="PIRSF037759">
    <property type="entry name" value="Histone_Asf1"/>
    <property type="match status" value="1"/>
</dbReference>
<dbReference type="SUPFAM" id="SSF101546">
    <property type="entry name" value="ASF1-like"/>
    <property type="match status" value="1"/>
</dbReference>
<feature type="chain" id="PRO_0000284039" description="Histone chaperone asf-1">
    <location>
        <begin position="1"/>
        <end position="271"/>
    </location>
</feature>
<feature type="region of interest" description="Disordered" evidence="2">
    <location>
        <begin position="152"/>
        <end position="271"/>
    </location>
</feature>
<feature type="compositionally biased region" description="Acidic residues" evidence="2">
    <location>
        <begin position="168"/>
        <end position="185"/>
    </location>
</feature>
<feature type="compositionally biased region" description="Acidic residues" evidence="2">
    <location>
        <begin position="211"/>
        <end position="258"/>
    </location>
</feature>
<name>ASF1_NEUCR</name>
<organism>
    <name type="scientific">Neurospora crassa (strain ATCC 24698 / 74-OR23-1A / CBS 708.71 / DSM 1257 / FGSC 987)</name>
    <dbReference type="NCBI Taxonomy" id="367110"/>
    <lineage>
        <taxon>Eukaryota</taxon>
        <taxon>Fungi</taxon>
        <taxon>Dikarya</taxon>
        <taxon>Ascomycota</taxon>
        <taxon>Pezizomycotina</taxon>
        <taxon>Sordariomycetes</taxon>
        <taxon>Sordariomycetidae</taxon>
        <taxon>Sordariales</taxon>
        <taxon>Sordariaceae</taxon>
        <taxon>Neurospora</taxon>
    </lineage>
</organism>
<reference key="1">
    <citation type="journal article" date="2003" name="Nature">
        <title>The genome sequence of the filamentous fungus Neurospora crassa.</title>
        <authorList>
            <person name="Galagan J.E."/>
            <person name="Calvo S.E."/>
            <person name="Borkovich K.A."/>
            <person name="Selker E.U."/>
            <person name="Read N.D."/>
            <person name="Jaffe D.B."/>
            <person name="FitzHugh W."/>
            <person name="Ma L.-J."/>
            <person name="Smirnov S."/>
            <person name="Purcell S."/>
            <person name="Rehman B."/>
            <person name="Elkins T."/>
            <person name="Engels R."/>
            <person name="Wang S."/>
            <person name="Nielsen C.B."/>
            <person name="Butler J."/>
            <person name="Endrizzi M."/>
            <person name="Qui D."/>
            <person name="Ianakiev P."/>
            <person name="Bell-Pedersen D."/>
            <person name="Nelson M.A."/>
            <person name="Werner-Washburne M."/>
            <person name="Selitrennikoff C.P."/>
            <person name="Kinsey J.A."/>
            <person name="Braun E.L."/>
            <person name="Zelter A."/>
            <person name="Schulte U."/>
            <person name="Kothe G.O."/>
            <person name="Jedd G."/>
            <person name="Mewes H.-W."/>
            <person name="Staben C."/>
            <person name="Marcotte E."/>
            <person name="Greenberg D."/>
            <person name="Roy A."/>
            <person name="Foley K."/>
            <person name="Naylor J."/>
            <person name="Stange-Thomann N."/>
            <person name="Barrett R."/>
            <person name="Gnerre S."/>
            <person name="Kamal M."/>
            <person name="Kamvysselis M."/>
            <person name="Mauceli E.W."/>
            <person name="Bielke C."/>
            <person name="Rudd S."/>
            <person name="Frishman D."/>
            <person name="Krystofova S."/>
            <person name="Rasmussen C."/>
            <person name="Metzenberg R.L."/>
            <person name="Perkins D.D."/>
            <person name="Kroken S."/>
            <person name="Cogoni C."/>
            <person name="Macino G."/>
            <person name="Catcheside D.E.A."/>
            <person name="Li W."/>
            <person name="Pratt R.J."/>
            <person name="Osmani S.A."/>
            <person name="DeSouza C.P.C."/>
            <person name="Glass N.L."/>
            <person name="Orbach M.J."/>
            <person name="Berglund J.A."/>
            <person name="Voelker R."/>
            <person name="Yarden O."/>
            <person name="Plamann M."/>
            <person name="Seiler S."/>
            <person name="Dunlap J.C."/>
            <person name="Radford A."/>
            <person name="Aramayo R."/>
            <person name="Natvig D.O."/>
            <person name="Alex L.A."/>
            <person name="Mannhaupt G."/>
            <person name="Ebbole D.J."/>
            <person name="Freitag M."/>
            <person name="Paulsen I."/>
            <person name="Sachs M.S."/>
            <person name="Lander E.S."/>
            <person name="Nusbaum C."/>
            <person name="Birren B.W."/>
        </authorList>
    </citation>
    <scope>NUCLEOTIDE SEQUENCE [LARGE SCALE GENOMIC DNA]</scope>
    <source>
        <strain>ATCC 24698 / 74-OR23-1A / CBS 708.71 / DSM 1257 / FGSC 987</strain>
    </source>
</reference>
<gene>
    <name type="primary">asf-1</name>
    <name type="ORF">NCU09436</name>
</gene>
<sequence>MSVVSLLGVNVMNNPAKFTDKYLFEITFECLEHLEKDLEWKLTYVGSATSDNYDQELDSLLVGPIPVGVNKFIFEAEPPDTKRIPIDELLGVTVILLTCAYDGREFVRVGYYVNNEYESEELINDPPPKPVIEKIRRNVLAEKPRVTRFAIKWDSEASAPPEFPPEQPEADEVADEEEYGADELAEQSSIADPAVNGGMEVEGQPNGAIVIEEDEMSEDGSVDLENESEDELDGEGDAEGELEQGQDEDIEMGDEMEIDDHPKQQGMAMAQ</sequence>
<accession>Q7S1X9</accession>
<comment type="function">
    <text evidence="1">Histone chaperone that facilitates histone deposition and histone exchange and removal during nucleosome assembly and disassembly.</text>
</comment>
<comment type="subunit">
    <text evidence="1">Interacts with histone H3 and histone H4.</text>
</comment>
<comment type="subcellular location">
    <subcellularLocation>
        <location evidence="1">Nucleus</location>
    </subcellularLocation>
</comment>
<comment type="similarity">
    <text evidence="3">Belongs to the ASF1 family.</text>
</comment>
<proteinExistence type="inferred from homology"/>
<evidence type="ECO:0000250" key="1"/>
<evidence type="ECO:0000256" key="2">
    <source>
        <dbReference type="SAM" id="MobiDB-lite"/>
    </source>
</evidence>
<evidence type="ECO:0000305" key="3"/>